<name>FPG_SHELP</name>
<reference key="1">
    <citation type="submission" date="2007-03" db="EMBL/GenBank/DDBJ databases">
        <title>Complete sequence of Shewanella loihica PV-4.</title>
        <authorList>
            <consortium name="US DOE Joint Genome Institute"/>
            <person name="Copeland A."/>
            <person name="Lucas S."/>
            <person name="Lapidus A."/>
            <person name="Barry K."/>
            <person name="Detter J.C."/>
            <person name="Glavina del Rio T."/>
            <person name="Hammon N."/>
            <person name="Israni S."/>
            <person name="Dalin E."/>
            <person name="Tice H."/>
            <person name="Pitluck S."/>
            <person name="Chain P."/>
            <person name="Malfatti S."/>
            <person name="Shin M."/>
            <person name="Vergez L."/>
            <person name="Schmutz J."/>
            <person name="Larimer F."/>
            <person name="Land M."/>
            <person name="Hauser L."/>
            <person name="Kyrpides N."/>
            <person name="Mikhailova N."/>
            <person name="Romine M.F."/>
            <person name="Serres G."/>
            <person name="Fredrickson J."/>
            <person name="Tiedje J."/>
            <person name="Richardson P."/>
        </authorList>
    </citation>
    <scope>NUCLEOTIDE SEQUENCE [LARGE SCALE GENOMIC DNA]</scope>
    <source>
        <strain>ATCC BAA-1088 / PV-4</strain>
    </source>
</reference>
<feature type="initiator methionine" description="Removed" evidence="1">
    <location>
        <position position="1"/>
    </location>
</feature>
<feature type="chain" id="PRO_1000008773" description="Formamidopyrimidine-DNA glycosylase">
    <location>
        <begin position="2"/>
        <end position="271"/>
    </location>
</feature>
<feature type="zinc finger region" description="FPG-type" evidence="2">
    <location>
        <begin position="236"/>
        <end position="270"/>
    </location>
</feature>
<feature type="active site" description="Schiff-base intermediate with DNA" evidence="2">
    <location>
        <position position="2"/>
    </location>
</feature>
<feature type="active site" description="Proton donor" evidence="2">
    <location>
        <position position="3"/>
    </location>
</feature>
<feature type="active site" description="Proton donor; for beta-elimination activity" evidence="2">
    <location>
        <position position="57"/>
    </location>
</feature>
<feature type="active site" description="Proton donor; for delta-elimination activity" evidence="2">
    <location>
        <position position="260"/>
    </location>
</feature>
<feature type="binding site" evidence="2">
    <location>
        <position position="90"/>
    </location>
    <ligand>
        <name>DNA</name>
        <dbReference type="ChEBI" id="CHEBI:16991"/>
    </ligand>
</feature>
<feature type="binding site" evidence="2">
    <location>
        <position position="109"/>
    </location>
    <ligand>
        <name>DNA</name>
        <dbReference type="ChEBI" id="CHEBI:16991"/>
    </ligand>
</feature>
<feature type="binding site" evidence="2">
    <location>
        <position position="151"/>
    </location>
    <ligand>
        <name>DNA</name>
        <dbReference type="ChEBI" id="CHEBI:16991"/>
    </ligand>
</feature>
<accession>A3QJA8</accession>
<evidence type="ECO:0000250" key="1"/>
<evidence type="ECO:0000255" key="2">
    <source>
        <dbReference type="HAMAP-Rule" id="MF_00103"/>
    </source>
</evidence>
<protein>
    <recommendedName>
        <fullName evidence="2">Formamidopyrimidine-DNA glycosylase</fullName>
        <shortName evidence="2">Fapy-DNA glycosylase</shortName>
        <ecNumber evidence="2">3.2.2.23</ecNumber>
    </recommendedName>
    <alternativeName>
        <fullName evidence="2">DNA-(apurinic or apyrimidinic site) lyase MutM</fullName>
        <shortName evidence="2">AP lyase MutM</shortName>
        <ecNumber evidence="2">4.2.99.18</ecNumber>
    </alternativeName>
</protein>
<organism>
    <name type="scientific">Shewanella loihica (strain ATCC BAA-1088 / PV-4)</name>
    <dbReference type="NCBI Taxonomy" id="323850"/>
    <lineage>
        <taxon>Bacteria</taxon>
        <taxon>Pseudomonadati</taxon>
        <taxon>Pseudomonadota</taxon>
        <taxon>Gammaproteobacteria</taxon>
        <taxon>Alteromonadales</taxon>
        <taxon>Shewanellaceae</taxon>
        <taxon>Shewanella</taxon>
    </lineage>
</organism>
<sequence length="271" mass="29708">MPELPEVEVTRQGISPHLLDQQVTGLTVRNASLRWPVPEVAQQIVGQTIRGIRRRAKYLLLDTDAGTTIVHLGMSGSLRILPKSTPVEKHDHIDLELASGKVLRFNDPRRFGAWLWCELPEAAHPLLAKLGPEPLQSGFNVDYLAKALEGKKKAVKLCLMDNHIVVGVGNIYANEALFAAGIHPQTEAGRIDRERLTVLVAEVKQILAQAIKQGGTTLKDFTNADGKPGYFAQKLHVYGRGGETCTQCGNLLSEIKLGQRATVFCGLCQPR</sequence>
<keyword id="KW-0227">DNA damage</keyword>
<keyword id="KW-0234">DNA repair</keyword>
<keyword id="KW-0238">DNA-binding</keyword>
<keyword id="KW-0326">Glycosidase</keyword>
<keyword id="KW-0378">Hydrolase</keyword>
<keyword id="KW-0456">Lyase</keyword>
<keyword id="KW-0479">Metal-binding</keyword>
<keyword id="KW-0511">Multifunctional enzyme</keyword>
<keyword id="KW-1185">Reference proteome</keyword>
<keyword id="KW-0862">Zinc</keyword>
<keyword id="KW-0863">Zinc-finger</keyword>
<gene>
    <name evidence="2" type="primary">mutM</name>
    <name evidence="2" type="synonym">fpg</name>
    <name type="ordered locus">Shew_3690</name>
</gene>
<comment type="function">
    <text evidence="2">Involved in base excision repair of DNA damaged by oxidation or by mutagenic agents. Acts as a DNA glycosylase that recognizes and removes damaged bases. Has a preference for oxidized purines, such as 7,8-dihydro-8-oxoguanine (8-oxoG). Has AP (apurinic/apyrimidinic) lyase activity and introduces nicks in the DNA strand. Cleaves the DNA backbone by beta-delta elimination to generate a single-strand break at the site of the removed base with both 3'- and 5'-phosphates.</text>
</comment>
<comment type="catalytic activity">
    <reaction evidence="2">
        <text>Hydrolysis of DNA containing ring-opened 7-methylguanine residues, releasing 2,6-diamino-4-hydroxy-5-(N-methyl)formamidopyrimidine.</text>
        <dbReference type="EC" id="3.2.2.23"/>
    </reaction>
</comment>
<comment type="catalytic activity">
    <reaction evidence="2">
        <text>2'-deoxyribonucleotide-(2'-deoxyribose 5'-phosphate)-2'-deoxyribonucleotide-DNA = a 3'-end 2'-deoxyribonucleotide-(2,3-dehydro-2,3-deoxyribose 5'-phosphate)-DNA + a 5'-end 5'-phospho-2'-deoxyribonucleoside-DNA + H(+)</text>
        <dbReference type="Rhea" id="RHEA:66592"/>
        <dbReference type="Rhea" id="RHEA-COMP:13180"/>
        <dbReference type="Rhea" id="RHEA-COMP:16897"/>
        <dbReference type="Rhea" id="RHEA-COMP:17067"/>
        <dbReference type="ChEBI" id="CHEBI:15378"/>
        <dbReference type="ChEBI" id="CHEBI:136412"/>
        <dbReference type="ChEBI" id="CHEBI:157695"/>
        <dbReference type="ChEBI" id="CHEBI:167181"/>
        <dbReference type="EC" id="4.2.99.18"/>
    </reaction>
</comment>
<comment type="cofactor">
    <cofactor evidence="2">
        <name>Zn(2+)</name>
        <dbReference type="ChEBI" id="CHEBI:29105"/>
    </cofactor>
    <text evidence="2">Binds 1 zinc ion per subunit.</text>
</comment>
<comment type="subunit">
    <text evidence="2">Monomer.</text>
</comment>
<comment type="similarity">
    <text evidence="2">Belongs to the FPG family.</text>
</comment>
<proteinExistence type="inferred from homology"/>
<dbReference type="EC" id="3.2.2.23" evidence="2"/>
<dbReference type="EC" id="4.2.99.18" evidence="2"/>
<dbReference type="EMBL" id="CP000606">
    <property type="protein sequence ID" value="ABO25556.1"/>
    <property type="molecule type" value="Genomic_DNA"/>
</dbReference>
<dbReference type="RefSeq" id="WP_011867484.1">
    <property type="nucleotide sequence ID" value="NC_009092.1"/>
</dbReference>
<dbReference type="SMR" id="A3QJA8"/>
<dbReference type="STRING" id="323850.Shew_3690"/>
<dbReference type="KEGG" id="slo:Shew_3690"/>
<dbReference type="eggNOG" id="COG0266">
    <property type="taxonomic scope" value="Bacteria"/>
</dbReference>
<dbReference type="HOGENOM" id="CLU_038423_1_1_6"/>
<dbReference type="OrthoDB" id="9800855at2"/>
<dbReference type="Proteomes" id="UP000001558">
    <property type="component" value="Chromosome"/>
</dbReference>
<dbReference type="GO" id="GO:0034039">
    <property type="term" value="F:8-oxo-7,8-dihydroguanine DNA N-glycosylase activity"/>
    <property type="evidence" value="ECO:0007669"/>
    <property type="project" value="TreeGrafter"/>
</dbReference>
<dbReference type="GO" id="GO:0140078">
    <property type="term" value="F:class I DNA-(apurinic or apyrimidinic site) endonuclease activity"/>
    <property type="evidence" value="ECO:0007669"/>
    <property type="project" value="UniProtKB-EC"/>
</dbReference>
<dbReference type="GO" id="GO:0003684">
    <property type="term" value="F:damaged DNA binding"/>
    <property type="evidence" value="ECO:0007669"/>
    <property type="project" value="InterPro"/>
</dbReference>
<dbReference type="GO" id="GO:0008270">
    <property type="term" value="F:zinc ion binding"/>
    <property type="evidence" value="ECO:0007669"/>
    <property type="project" value="UniProtKB-UniRule"/>
</dbReference>
<dbReference type="GO" id="GO:0006284">
    <property type="term" value="P:base-excision repair"/>
    <property type="evidence" value="ECO:0007669"/>
    <property type="project" value="InterPro"/>
</dbReference>
<dbReference type="CDD" id="cd08966">
    <property type="entry name" value="EcFpg-like_N"/>
    <property type="match status" value="1"/>
</dbReference>
<dbReference type="FunFam" id="1.10.8.50:FF:000003">
    <property type="entry name" value="Formamidopyrimidine-DNA glycosylase"/>
    <property type="match status" value="1"/>
</dbReference>
<dbReference type="FunFam" id="3.20.190.10:FF:000001">
    <property type="entry name" value="Formamidopyrimidine-DNA glycosylase"/>
    <property type="match status" value="1"/>
</dbReference>
<dbReference type="Gene3D" id="1.10.8.50">
    <property type="match status" value="1"/>
</dbReference>
<dbReference type="Gene3D" id="3.20.190.10">
    <property type="entry name" value="MutM-like, N-terminal"/>
    <property type="match status" value="1"/>
</dbReference>
<dbReference type="HAMAP" id="MF_00103">
    <property type="entry name" value="Fapy_DNA_glycosyl"/>
    <property type="match status" value="1"/>
</dbReference>
<dbReference type="InterPro" id="IPR015886">
    <property type="entry name" value="DNA_glyclase/AP_lyase_DNA-bd"/>
</dbReference>
<dbReference type="InterPro" id="IPR015887">
    <property type="entry name" value="DNA_glyclase_Znf_dom_DNA_BS"/>
</dbReference>
<dbReference type="InterPro" id="IPR020629">
    <property type="entry name" value="Formamido-pyr_DNA_Glyclase"/>
</dbReference>
<dbReference type="InterPro" id="IPR012319">
    <property type="entry name" value="FPG_cat"/>
</dbReference>
<dbReference type="InterPro" id="IPR035937">
    <property type="entry name" value="MutM-like_N-ter"/>
</dbReference>
<dbReference type="InterPro" id="IPR010979">
    <property type="entry name" value="Ribosomal_uS13-like_H2TH"/>
</dbReference>
<dbReference type="InterPro" id="IPR000214">
    <property type="entry name" value="Znf_DNA_glyclase/AP_lyase"/>
</dbReference>
<dbReference type="InterPro" id="IPR010663">
    <property type="entry name" value="Znf_FPG/IleRS"/>
</dbReference>
<dbReference type="NCBIfam" id="TIGR00577">
    <property type="entry name" value="fpg"/>
    <property type="match status" value="1"/>
</dbReference>
<dbReference type="NCBIfam" id="NF002211">
    <property type="entry name" value="PRK01103.1"/>
    <property type="match status" value="1"/>
</dbReference>
<dbReference type="PANTHER" id="PTHR22993">
    <property type="entry name" value="FORMAMIDOPYRIMIDINE-DNA GLYCOSYLASE"/>
    <property type="match status" value="1"/>
</dbReference>
<dbReference type="PANTHER" id="PTHR22993:SF9">
    <property type="entry name" value="FORMAMIDOPYRIMIDINE-DNA GLYCOSYLASE"/>
    <property type="match status" value="1"/>
</dbReference>
<dbReference type="Pfam" id="PF01149">
    <property type="entry name" value="Fapy_DNA_glyco"/>
    <property type="match status" value="1"/>
</dbReference>
<dbReference type="Pfam" id="PF06831">
    <property type="entry name" value="H2TH"/>
    <property type="match status" value="1"/>
</dbReference>
<dbReference type="Pfam" id="PF06827">
    <property type="entry name" value="zf-FPG_IleRS"/>
    <property type="match status" value="1"/>
</dbReference>
<dbReference type="SMART" id="SM00898">
    <property type="entry name" value="Fapy_DNA_glyco"/>
    <property type="match status" value="1"/>
</dbReference>
<dbReference type="SMART" id="SM01232">
    <property type="entry name" value="H2TH"/>
    <property type="match status" value="1"/>
</dbReference>
<dbReference type="SUPFAM" id="SSF57716">
    <property type="entry name" value="Glucocorticoid receptor-like (DNA-binding domain)"/>
    <property type="match status" value="1"/>
</dbReference>
<dbReference type="SUPFAM" id="SSF81624">
    <property type="entry name" value="N-terminal domain of MutM-like DNA repair proteins"/>
    <property type="match status" value="1"/>
</dbReference>
<dbReference type="SUPFAM" id="SSF46946">
    <property type="entry name" value="S13-like H2TH domain"/>
    <property type="match status" value="1"/>
</dbReference>
<dbReference type="PROSITE" id="PS51068">
    <property type="entry name" value="FPG_CAT"/>
    <property type="match status" value="1"/>
</dbReference>
<dbReference type="PROSITE" id="PS01242">
    <property type="entry name" value="ZF_FPG_1"/>
    <property type="match status" value="1"/>
</dbReference>
<dbReference type="PROSITE" id="PS51066">
    <property type="entry name" value="ZF_FPG_2"/>
    <property type="match status" value="1"/>
</dbReference>